<accession>Q54U61</accession>
<feature type="chain" id="PRO_0000328078" description="Protein transport protein SEC24">
    <location>
        <begin position="1"/>
        <end position="1013"/>
    </location>
</feature>
<feature type="region of interest" description="Disordered" evidence="2">
    <location>
        <begin position="1"/>
        <end position="273"/>
    </location>
</feature>
<feature type="region of interest" description="Zinc finger-like" evidence="1">
    <location>
        <begin position="334"/>
        <end position="359"/>
    </location>
</feature>
<feature type="compositionally biased region" description="Low complexity" evidence="2">
    <location>
        <begin position="11"/>
        <end position="39"/>
    </location>
</feature>
<feature type="compositionally biased region" description="Low complexity" evidence="2">
    <location>
        <begin position="47"/>
        <end position="73"/>
    </location>
</feature>
<feature type="compositionally biased region" description="Low complexity" evidence="2">
    <location>
        <begin position="97"/>
        <end position="114"/>
    </location>
</feature>
<feature type="compositionally biased region" description="Pro residues" evidence="2">
    <location>
        <begin position="115"/>
        <end position="125"/>
    </location>
</feature>
<feature type="compositionally biased region" description="Polar residues" evidence="2">
    <location>
        <begin position="126"/>
        <end position="135"/>
    </location>
</feature>
<feature type="compositionally biased region" description="Low complexity" evidence="2">
    <location>
        <begin position="136"/>
        <end position="223"/>
    </location>
</feature>
<feature type="compositionally biased region" description="Low complexity" evidence="2">
    <location>
        <begin position="231"/>
        <end position="269"/>
    </location>
</feature>
<feature type="binding site" evidence="1">
    <location>
        <position position="334"/>
    </location>
    <ligand>
        <name>Zn(2+)</name>
        <dbReference type="ChEBI" id="CHEBI:29105"/>
    </ligand>
</feature>
<feature type="binding site" evidence="1">
    <location>
        <position position="337"/>
    </location>
    <ligand>
        <name>Zn(2+)</name>
        <dbReference type="ChEBI" id="CHEBI:29105"/>
    </ligand>
</feature>
<feature type="binding site" evidence="1">
    <location>
        <position position="356"/>
    </location>
    <ligand>
        <name>Zn(2+)</name>
        <dbReference type="ChEBI" id="CHEBI:29105"/>
    </ligand>
</feature>
<feature type="binding site" evidence="1">
    <location>
        <position position="359"/>
    </location>
    <ligand>
        <name>Zn(2+)</name>
        <dbReference type="ChEBI" id="CHEBI:29105"/>
    </ligand>
</feature>
<sequence>MTSKRQYPIDQSNQLSQGQNPSPQQPLQQYPQQPYQPNPTYGNDTTQQWNQTPQQQQQPQQQNISPPQSQNQNGVQNTIHTGGSKRVYPVDPQNETLLSSNFSNMNLSSQQQQPLPQPTHIPVPGPNTTTYNPYIQQPQQQPQQQPQQQPQQPQQPQQQPQQQTQQPQTWNTSPPQTQQQPIQTFTPHISPPQTQQQQPQQTTPFQPMQPTQPSYSQPQQTQPLPLPPMQPSYNQQPYTQQPYTQQPYTQQPGQQSQYQQPQQQTPQQQAAVEQPVPTLENLCPKPFMRLSMNAIPNHPSILNKVHIPLGLNIHPLAHDPQGPVPVVYSSIIRCRRCRTYINPFVTWLNGGGRWRCNMCENINDTPQDYFSPIDFTTGKRSDILNRPELQKGCVEFLASSDYLVRPPQPPTYFFIVDVCYESIVSGMLNTAINAIKTTLGDLIEKSNGRARFGIMTFDDSLHFYNLKSNPSNRPQMFVVTDMDQVYVPPFEDFLVNLKDGLEVVENTLNIIQSMPRTQQKVESCLGSALKAAFSICERVGGKLIVLQSYIPRGPLGKLSIRDYQPLLGTKKESTLLQPSNDGEFYKELALSCTSQQLSVDLFLFSNDYTDTASLGTLCQITGGSMYYYPSFVASRDGQVFAANLIHSLTRDTAWEAVMRVRTSRGLTINSYHGNYFLKTSDLLGLPTIDSDKTITLQMGISDSIGQKYASLQSALLYTHSCGERRVRVFTISIPVVSNYQDLFRYADISVVTSLISKMAIDKALSSSLNDARDAIANKCVEILQAFKAASTSNPQANPAVTLSQNAPKLLLPETLKHLPLYVVSMVKSIIFSSRTTHPDLRAFHMQRMKTLDLNSCLNFFYPYFYSLLAPPNYQPPTTPNTPFVPHSFKLSSDELQRNGLFAIVNGYTLYLFIGEQLPQPVFTDIFGVPDVSQLDINTFQDLPILDNDHSRYARKVIELVRNSYPEYLKMFVVKSTDRQRRPEFQSLLIEDRTPEGCSYYEFIIQLQSRITQN</sequence>
<organism>
    <name type="scientific">Dictyostelium discoideum</name>
    <name type="common">Social amoeba</name>
    <dbReference type="NCBI Taxonomy" id="44689"/>
    <lineage>
        <taxon>Eukaryota</taxon>
        <taxon>Amoebozoa</taxon>
        <taxon>Evosea</taxon>
        <taxon>Eumycetozoa</taxon>
        <taxon>Dictyostelia</taxon>
        <taxon>Dictyosteliales</taxon>
        <taxon>Dictyosteliaceae</taxon>
        <taxon>Dictyostelium</taxon>
    </lineage>
</organism>
<name>SEC24_DICDI</name>
<keyword id="KW-0968">Cytoplasmic vesicle</keyword>
<keyword id="KW-0256">Endoplasmic reticulum</keyword>
<keyword id="KW-0931">ER-Golgi transport</keyword>
<keyword id="KW-0333">Golgi apparatus</keyword>
<keyword id="KW-0472">Membrane</keyword>
<keyword id="KW-0479">Metal-binding</keyword>
<keyword id="KW-0653">Protein transport</keyword>
<keyword id="KW-1185">Reference proteome</keyword>
<keyword id="KW-0813">Transport</keyword>
<keyword id="KW-0862">Zinc</keyword>
<proteinExistence type="inferred from homology"/>
<dbReference type="EMBL" id="AAFI02000040">
    <property type="protein sequence ID" value="EAL66924.1"/>
    <property type="molecule type" value="Genomic_DNA"/>
</dbReference>
<dbReference type="RefSeq" id="XP_640915.1">
    <property type="nucleotide sequence ID" value="XM_635823.1"/>
</dbReference>
<dbReference type="SMR" id="Q54U61"/>
<dbReference type="FunCoup" id="Q54U61">
    <property type="interactions" value="797"/>
</dbReference>
<dbReference type="STRING" id="44689.Q54U61"/>
<dbReference type="PaxDb" id="44689-DDB0235165"/>
<dbReference type="EnsemblProtists" id="EAL66924">
    <property type="protein sequence ID" value="EAL66924"/>
    <property type="gene ID" value="DDB_G0281255"/>
</dbReference>
<dbReference type="GeneID" id="8622978"/>
<dbReference type="KEGG" id="ddi:DDB_G0281255"/>
<dbReference type="dictyBase" id="DDB_G0281255">
    <property type="gene designation" value="sec24"/>
</dbReference>
<dbReference type="VEuPathDB" id="AmoebaDB:DDB_G0281255"/>
<dbReference type="eggNOG" id="KOG1985">
    <property type="taxonomic scope" value="Eukaryota"/>
</dbReference>
<dbReference type="HOGENOM" id="CLU_004589_2_1_1"/>
<dbReference type="InParanoid" id="Q54U61"/>
<dbReference type="OMA" id="AVECSKQ"/>
<dbReference type="PhylomeDB" id="Q54U61"/>
<dbReference type="Reactome" id="R-DDI-204005">
    <property type="pathway name" value="COPII-mediated vesicle transport"/>
</dbReference>
<dbReference type="Reactome" id="R-DDI-5694530">
    <property type="pathway name" value="Cargo concentration in the ER"/>
</dbReference>
<dbReference type="Reactome" id="R-DDI-983170">
    <property type="pathway name" value="Antigen Presentation: Folding, assembly and peptide loading of class I MHC"/>
</dbReference>
<dbReference type="PRO" id="PR:Q54U61"/>
<dbReference type="Proteomes" id="UP000002195">
    <property type="component" value="Chromosome 3"/>
</dbReference>
<dbReference type="GO" id="GO:0030127">
    <property type="term" value="C:COPII vesicle coat"/>
    <property type="evidence" value="ECO:0000318"/>
    <property type="project" value="GO_Central"/>
</dbReference>
<dbReference type="GO" id="GO:0070971">
    <property type="term" value="C:endoplasmic reticulum exit site"/>
    <property type="evidence" value="ECO:0000318"/>
    <property type="project" value="GO_Central"/>
</dbReference>
<dbReference type="GO" id="GO:0005789">
    <property type="term" value="C:endoplasmic reticulum membrane"/>
    <property type="evidence" value="ECO:0007669"/>
    <property type="project" value="UniProtKB-SubCell"/>
</dbReference>
<dbReference type="GO" id="GO:0000139">
    <property type="term" value="C:Golgi membrane"/>
    <property type="evidence" value="ECO:0007669"/>
    <property type="project" value="UniProtKB-SubCell"/>
</dbReference>
<dbReference type="GO" id="GO:0000149">
    <property type="term" value="F:SNARE binding"/>
    <property type="evidence" value="ECO:0000318"/>
    <property type="project" value="GO_Central"/>
</dbReference>
<dbReference type="GO" id="GO:0008270">
    <property type="term" value="F:zinc ion binding"/>
    <property type="evidence" value="ECO:0000318"/>
    <property type="project" value="GO_Central"/>
</dbReference>
<dbReference type="GO" id="GO:0090110">
    <property type="term" value="P:COPII-coated vesicle cargo loading"/>
    <property type="evidence" value="ECO:0000318"/>
    <property type="project" value="GO_Central"/>
</dbReference>
<dbReference type="GO" id="GO:0006886">
    <property type="term" value="P:intracellular protein transport"/>
    <property type="evidence" value="ECO:0007669"/>
    <property type="project" value="InterPro"/>
</dbReference>
<dbReference type="Gene3D" id="2.60.40.1670">
    <property type="entry name" value="beta-sandwich domain of Sec23/24"/>
    <property type="match status" value="1"/>
</dbReference>
<dbReference type="Gene3D" id="1.20.120.730">
    <property type="entry name" value="Sec23/Sec24 helical domain"/>
    <property type="match status" value="1"/>
</dbReference>
<dbReference type="Gene3D" id="3.40.20.10">
    <property type="entry name" value="Severin"/>
    <property type="match status" value="1"/>
</dbReference>
<dbReference type="Gene3D" id="3.40.50.410">
    <property type="entry name" value="von Willebrand factor, type A domain"/>
    <property type="match status" value="1"/>
</dbReference>
<dbReference type="Gene3D" id="2.30.30.380">
    <property type="entry name" value="Zn-finger domain of Sec23/24"/>
    <property type="match status" value="1"/>
</dbReference>
<dbReference type="InterPro" id="IPR029006">
    <property type="entry name" value="ADF-H/Gelsolin-like_dom_sf"/>
</dbReference>
<dbReference type="InterPro" id="IPR036180">
    <property type="entry name" value="Gelsolin-like_dom_sf"/>
</dbReference>
<dbReference type="InterPro" id="IPR006900">
    <property type="entry name" value="Sec23/24_helical_dom"/>
</dbReference>
<dbReference type="InterPro" id="IPR036175">
    <property type="entry name" value="Sec23/24_helical_dom_sf"/>
</dbReference>
<dbReference type="InterPro" id="IPR006896">
    <property type="entry name" value="Sec23/24_trunk_dom"/>
</dbReference>
<dbReference type="InterPro" id="IPR012990">
    <property type="entry name" value="Sec23_24_beta_S"/>
</dbReference>
<dbReference type="InterPro" id="IPR050550">
    <property type="entry name" value="SEC23_SEC24_subfamily"/>
</dbReference>
<dbReference type="InterPro" id="IPR036465">
    <property type="entry name" value="vWFA_dom_sf"/>
</dbReference>
<dbReference type="InterPro" id="IPR006895">
    <property type="entry name" value="Znf_Sec23_Sec24"/>
</dbReference>
<dbReference type="InterPro" id="IPR036174">
    <property type="entry name" value="Znf_Sec23_Sec24_sf"/>
</dbReference>
<dbReference type="PANTHER" id="PTHR13803">
    <property type="entry name" value="SEC24-RELATED PROTEIN"/>
    <property type="match status" value="1"/>
</dbReference>
<dbReference type="PANTHER" id="PTHR13803:SF39">
    <property type="entry name" value="SECRETORY 24AB, ISOFORM A"/>
    <property type="match status" value="1"/>
</dbReference>
<dbReference type="Pfam" id="PF08033">
    <property type="entry name" value="Sec23_BS"/>
    <property type="match status" value="1"/>
</dbReference>
<dbReference type="Pfam" id="PF04815">
    <property type="entry name" value="Sec23_helical"/>
    <property type="match status" value="1"/>
</dbReference>
<dbReference type="Pfam" id="PF04811">
    <property type="entry name" value="Sec23_trunk"/>
    <property type="match status" value="1"/>
</dbReference>
<dbReference type="Pfam" id="PF04810">
    <property type="entry name" value="zf-Sec23_Sec24"/>
    <property type="match status" value="1"/>
</dbReference>
<dbReference type="SUPFAM" id="SSF81995">
    <property type="entry name" value="beta-sandwich domain of Sec23/24"/>
    <property type="match status" value="1"/>
</dbReference>
<dbReference type="SUPFAM" id="SSF82754">
    <property type="entry name" value="C-terminal, gelsolin-like domain of Sec23/24"/>
    <property type="match status" value="1"/>
</dbReference>
<dbReference type="SUPFAM" id="SSF81811">
    <property type="entry name" value="Helical domain of Sec23/24"/>
    <property type="match status" value="1"/>
</dbReference>
<dbReference type="SUPFAM" id="SSF53300">
    <property type="entry name" value="vWA-like"/>
    <property type="match status" value="1"/>
</dbReference>
<dbReference type="SUPFAM" id="SSF82919">
    <property type="entry name" value="Zn-finger domain of Sec23/24"/>
    <property type="match status" value="1"/>
</dbReference>
<reference key="1">
    <citation type="journal article" date="2005" name="Nature">
        <title>The genome of the social amoeba Dictyostelium discoideum.</title>
        <authorList>
            <person name="Eichinger L."/>
            <person name="Pachebat J.A."/>
            <person name="Gloeckner G."/>
            <person name="Rajandream M.A."/>
            <person name="Sucgang R."/>
            <person name="Berriman M."/>
            <person name="Song J."/>
            <person name="Olsen R."/>
            <person name="Szafranski K."/>
            <person name="Xu Q."/>
            <person name="Tunggal B."/>
            <person name="Kummerfeld S."/>
            <person name="Madera M."/>
            <person name="Konfortov B.A."/>
            <person name="Rivero F."/>
            <person name="Bankier A.T."/>
            <person name="Lehmann R."/>
            <person name="Hamlin N."/>
            <person name="Davies R."/>
            <person name="Gaudet P."/>
            <person name="Fey P."/>
            <person name="Pilcher K."/>
            <person name="Chen G."/>
            <person name="Saunders D."/>
            <person name="Sodergren E.J."/>
            <person name="Davis P."/>
            <person name="Kerhornou A."/>
            <person name="Nie X."/>
            <person name="Hall N."/>
            <person name="Anjard C."/>
            <person name="Hemphill L."/>
            <person name="Bason N."/>
            <person name="Farbrother P."/>
            <person name="Desany B."/>
            <person name="Just E."/>
            <person name="Morio T."/>
            <person name="Rost R."/>
            <person name="Churcher C.M."/>
            <person name="Cooper J."/>
            <person name="Haydock S."/>
            <person name="van Driessche N."/>
            <person name="Cronin A."/>
            <person name="Goodhead I."/>
            <person name="Muzny D.M."/>
            <person name="Mourier T."/>
            <person name="Pain A."/>
            <person name="Lu M."/>
            <person name="Harper D."/>
            <person name="Lindsay R."/>
            <person name="Hauser H."/>
            <person name="James K.D."/>
            <person name="Quiles M."/>
            <person name="Madan Babu M."/>
            <person name="Saito T."/>
            <person name="Buchrieser C."/>
            <person name="Wardroper A."/>
            <person name="Felder M."/>
            <person name="Thangavelu M."/>
            <person name="Johnson D."/>
            <person name="Knights A."/>
            <person name="Loulseged H."/>
            <person name="Mungall K.L."/>
            <person name="Oliver K."/>
            <person name="Price C."/>
            <person name="Quail M.A."/>
            <person name="Urushihara H."/>
            <person name="Hernandez J."/>
            <person name="Rabbinowitsch E."/>
            <person name="Steffen D."/>
            <person name="Sanders M."/>
            <person name="Ma J."/>
            <person name="Kohara Y."/>
            <person name="Sharp S."/>
            <person name="Simmonds M.N."/>
            <person name="Spiegler S."/>
            <person name="Tivey A."/>
            <person name="Sugano S."/>
            <person name="White B."/>
            <person name="Walker D."/>
            <person name="Woodward J.R."/>
            <person name="Winckler T."/>
            <person name="Tanaka Y."/>
            <person name="Shaulsky G."/>
            <person name="Schleicher M."/>
            <person name="Weinstock G.M."/>
            <person name="Rosenthal A."/>
            <person name="Cox E.C."/>
            <person name="Chisholm R.L."/>
            <person name="Gibbs R.A."/>
            <person name="Loomis W.F."/>
            <person name="Platzer M."/>
            <person name="Kay R.R."/>
            <person name="Williams J.G."/>
            <person name="Dear P.H."/>
            <person name="Noegel A.A."/>
            <person name="Barrell B.G."/>
            <person name="Kuspa A."/>
        </authorList>
    </citation>
    <scope>NUCLEOTIDE SEQUENCE [LARGE SCALE GENOMIC DNA]</scope>
    <source>
        <strain>AX4</strain>
    </source>
</reference>
<comment type="function">
    <text evidence="1">Component of the coat protein complex II (COPII) which promotes the formation of transport vesicles from the endoplasmic reticulum (ER). The coat has two main functions, the physical deformation of the endoplasmic reticulum membrane into vesicles and the selection of cargo molecules (By similarity).</text>
</comment>
<comment type="subunit">
    <text evidence="1">The COPII coat is composed of at least 5 proteins: the sec23/24 complex, the sec13/31 complex, and the protein sar1A or sar1B.</text>
</comment>
<comment type="subcellular location">
    <subcellularLocation>
        <location evidence="1">Cytoplasmic vesicle</location>
        <location evidence="1">COPII-coated vesicle membrane</location>
        <topology evidence="1">Peripheral membrane protein</topology>
        <orientation evidence="1">Cytoplasmic side</orientation>
    </subcellularLocation>
    <subcellularLocation>
        <location evidence="1">Endoplasmic reticulum membrane</location>
        <topology evidence="1">Peripheral membrane protein</topology>
        <orientation evidence="1">Cytoplasmic side</orientation>
    </subcellularLocation>
    <subcellularLocation>
        <location evidence="1">Golgi apparatus membrane</location>
        <topology evidence="1">Peripheral membrane protein</topology>
        <orientation evidence="1">Cytoplasmic side</orientation>
    </subcellularLocation>
</comment>
<comment type="similarity">
    <text evidence="3">Belongs to the SEC23/SEC24 family. SEC24 subfamily.</text>
</comment>
<gene>
    <name type="primary">sec24</name>
    <name type="ORF">DDB_G0281255</name>
</gene>
<protein>
    <recommendedName>
        <fullName>Protein transport protein SEC24</fullName>
    </recommendedName>
</protein>
<evidence type="ECO:0000250" key="1"/>
<evidence type="ECO:0000256" key="2">
    <source>
        <dbReference type="SAM" id="MobiDB-lite"/>
    </source>
</evidence>
<evidence type="ECO:0000305" key="3"/>